<proteinExistence type="inferred from homology"/>
<organism>
    <name type="scientific">Yersinia pestis bv. Antiqua (strain Antiqua)</name>
    <dbReference type="NCBI Taxonomy" id="360102"/>
    <lineage>
        <taxon>Bacteria</taxon>
        <taxon>Pseudomonadati</taxon>
        <taxon>Pseudomonadota</taxon>
        <taxon>Gammaproteobacteria</taxon>
        <taxon>Enterobacterales</taxon>
        <taxon>Yersiniaceae</taxon>
        <taxon>Yersinia</taxon>
    </lineage>
</organism>
<protein>
    <recommendedName>
        <fullName evidence="1">ATP-dependent lipid A-core flippase</fullName>
        <ecNumber evidence="1">7.5.2.6</ecNumber>
    </recommendedName>
    <alternativeName>
        <fullName evidence="1">Lipid A export ATP-binding/permease protein MsbA</fullName>
    </alternativeName>
</protein>
<reference key="1">
    <citation type="journal article" date="2006" name="J. Bacteriol.">
        <title>Complete genome sequence of Yersinia pestis strains Antiqua and Nepal516: evidence of gene reduction in an emerging pathogen.</title>
        <authorList>
            <person name="Chain P.S.G."/>
            <person name="Hu P."/>
            <person name="Malfatti S.A."/>
            <person name="Radnedge L."/>
            <person name="Larimer F."/>
            <person name="Vergez L.M."/>
            <person name="Worsham P."/>
            <person name="Chu M.C."/>
            <person name="Andersen G.L."/>
        </authorList>
    </citation>
    <scope>NUCLEOTIDE SEQUENCE [LARGE SCALE GENOMIC DNA]</scope>
    <source>
        <strain>Antiqua</strain>
    </source>
</reference>
<dbReference type="EC" id="7.5.2.6" evidence="1"/>
<dbReference type="EMBL" id="CP000308">
    <property type="protein sequence ID" value="ABG12654.1"/>
    <property type="molecule type" value="Genomic_DNA"/>
</dbReference>
<dbReference type="RefSeq" id="WP_002211320.1">
    <property type="nucleotide sequence ID" value="NZ_CP009906.1"/>
</dbReference>
<dbReference type="SMR" id="Q1CA68"/>
<dbReference type="GeneID" id="57977191"/>
<dbReference type="KEGG" id="ypa:YPA_0686"/>
<dbReference type="Proteomes" id="UP000001971">
    <property type="component" value="Chromosome"/>
</dbReference>
<dbReference type="GO" id="GO:0005886">
    <property type="term" value="C:plasma membrane"/>
    <property type="evidence" value="ECO:0007669"/>
    <property type="project" value="UniProtKB-SubCell"/>
</dbReference>
<dbReference type="GO" id="GO:0015421">
    <property type="term" value="F:ABC-type oligopeptide transporter activity"/>
    <property type="evidence" value="ECO:0007669"/>
    <property type="project" value="TreeGrafter"/>
</dbReference>
<dbReference type="GO" id="GO:0005524">
    <property type="term" value="F:ATP binding"/>
    <property type="evidence" value="ECO:0007669"/>
    <property type="project" value="UniProtKB-KW"/>
</dbReference>
<dbReference type="GO" id="GO:0016887">
    <property type="term" value="F:ATP hydrolysis activity"/>
    <property type="evidence" value="ECO:0007669"/>
    <property type="project" value="InterPro"/>
</dbReference>
<dbReference type="GO" id="GO:0034040">
    <property type="term" value="F:ATPase-coupled lipid transmembrane transporter activity"/>
    <property type="evidence" value="ECO:0007669"/>
    <property type="project" value="InterPro"/>
</dbReference>
<dbReference type="CDD" id="cd18552">
    <property type="entry name" value="ABC_6TM_MsbA_like"/>
    <property type="match status" value="1"/>
</dbReference>
<dbReference type="CDD" id="cd03251">
    <property type="entry name" value="ABCC_MsbA"/>
    <property type="match status" value="1"/>
</dbReference>
<dbReference type="FunFam" id="1.20.1560.10:FF:000008">
    <property type="entry name" value="Lipid A export ATP-binding/permease protein MsbA"/>
    <property type="match status" value="1"/>
</dbReference>
<dbReference type="FunFam" id="3.40.50.300:FF:000140">
    <property type="entry name" value="Lipid A export ATP-binding/permease protein MsbA"/>
    <property type="match status" value="1"/>
</dbReference>
<dbReference type="Gene3D" id="1.20.1560.10">
    <property type="entry name" value="ABC transporter type 1, transmembrane domain"/>
    <property type="match status" value="1"/>
</dbReference>
<dbReference type="Gene3D" id="3.40.50.300">
    <property type="entry name" value="P-loop containing nucleotide triphosphate hydrolases"/>
    <property type="match status" value="1"/>
</dbReference>
<dbReference type="InterPro" id="IPR003593">
    <property type="entry name" value="AAA+_ATPase"/>
</dbReference>
<dbReference type="InterPro" id="IPR011527">
    <property type="entry name" value="ABC1_TM_dom"/>
</dbReference>
<dbReference type="InterPro" id="IPR036640">
    <property type="entry name" value="ABC1_TM_sf"/>
</dbReference>
<dbReference type="InterPro" id="IPR003439">
    <property type="entry name" value="ABC_transporter-like_ATP-bd"/>
</dbReference>
<dbReference type="InterPro" id="IPR017871">
    <property type="entry name" value="ABC_transporter-like_CS"/>
</dbReference>
<dbReference type="InterPro" id="IPR011917">
    <property type="entry name" value="ABC_transpr_lipidA"/>
</dbReference>
<dbReference type="InterPro" id="IPR027417">
    <property type="entry name" value="P-loop_NTPase"/>
</dbReference>
<dbReference type="InterPro" id="IPR039421">
    <property type="entry name" value="Type_1_exporter"/>
</dbReference>
<dbReference type="NCBIfam" id="TIGR02203">
    <property type="entry name" value="MsbA_lipidA"/>
    <property type="match status" value="1"/>
</dbReference>
<dbReference type="NCBIfam" id="NF008381">
    <property type="entry name" value="PRK11176.1"/>
    <property type="match status" value="1"/>
</dbReference>
<dbReference type="PANTHER" id="PTHR43394:SF1">
    <property type="entry name" value="ATP-BINDING CASSETTE SUB-FAMILY B MEMBER 10, MITOCHONDRIAL"/>
    <property type="match status" value="1"/>
</dbReference>
<dbReference type="PANTHER" id="PTHR43394">
    <property type="entry name" value="ATP-DEPENDENT PERMEASE MDL1, MITOCHONDRIAL"/>
    <property type="match status" value="1"/>
</dbReference>
<dbReference type="Pfam" id="PF00664">
    <property type="entry name" value="ABC_membrane"/>
    <property type="match status" value="1"/>
</dbReference>
<dbReference type="Pfam" id="PF00005">
    <property type="entry name" value="ABC_tran"/>
    <property type="match status" value="1"/>
</dbReference>
<dbReference type="SMART" id="SM00382">
    <property type="entry name" value="AAA"/>
    <property type="match status" value="1"/>
</dbReference>
<dbReference type="SUPFAM" id="SSF90123">
    <property type="entry name" value="ABC transporter transmembrane region"/>
    <property type="match status" value="1"/>
</dbReference>
<dbReference type="SUPFAM" id="SSF52540">
    <property type="entry name" value="P-loop containing nucleoside triphosphate hydrolases"/>
    <property type="match status" value="1"/>
</dbReference>
<dbReference type="PROSITE" id="PS50929">
    <property type="entry name" value="ABC_TM1F"/>
    <property type="match status" value="1"/>
</dbReference>
<dbReference type="PROSITE" id="PS00211">
    <property type="entry name" value="ABC_TRANSPORTER_1"/>
    <property type="match status" value="1"/>
</dbReference>
<dbReference type="PROSITE" id="PS50893">
    <property type="entry name" value="ABC_TRANSPORTER_2"/>
    <property type="match status" value="1"/>
</dbReference>
<dbReference type="PROSITE" id="PS51239">
    <property type="entry name" value="MSBA"/>
    <property type="match status" value="1"/>
</dbReference>
<comment type="function">
    <text evidence="1">Involved in lipopolysaccharide (LPS) biosynthesis. Translocates lipid A-core from the inner to the outer leaflet of the inner membrane. Transmembrane domains (TMD) form a pore in the inner membrane and the ATP-binding domain (NBD) is responsible for energy generation.</text>
</comment>
<comment type="catalytic activity">
    <reaction evidence="1">
        <text>ATP + H2O + lipid A-core oligosaccharideSide 1 = ADP + phosphate + lipid A-core oligosaccharideSide 2.</text>
        <dbReference type="EC" id="7.5.2.6"/>
    </reaction>
</comment>
<comment type="subunit">
    <text evidence="1">Homodimer.</text>
</comment>
<comment type="subcellular location">
    <subcellularLocation>
        <location evidence="1">Cell inner membrane</location>
        <topology evidence="1">Multi-pass membrane protein</topology>
    </subcellularLocation>
</comment>
<comment type="domain">
    <text evidence="1">In MsbA the ATP-binding domain (NBD) and the transmembrane domain (TMD) are fused.</text>
</comment>
<comment type="similarity">
    <text evidence="1">Belongs to the ABC transporter superfamily. Lipid exporter (TC 3.A.1.106) family.</text>
</comment>
<gene>
    <name evidence="1" type="primary">msbA</name>
    <name type="ordered locus">YPA_0686</name>
</gene>
<name>MSBA_YERPA</name>
<feature type="chain" id="PRO_5000115822" description="ATP-dependent lipid A-core flippase">
    <location>
        <begin position="1"/>
        <end position="582"/>
    </location>
</feature>
<feature type="transmembrane region" description="Helical" evidence="1">
    <location>
        <begin position="25"/>
        <end position="45"/>
    </location>
</feature>
<feature type="transmembrane region" description="Helical" evidence="1">
    <location>
        <begin position="69"/>
        <end position="89"/>
    </location>
</feature>
<feature type="transmembrane region" description="Helical" evidence="1">
    <location>
        <begin position="137"/>
        <end position="159"/>
    </location>
</feature>
<feature type="transmembrane region" description="Helical" evidence="1">
    <location>
        <begin position="253"/>
        <end position="273"/>
    </location>
</feature>
<feature type="transmembrane region" description="Helical" evidence="1">
    <location>
        <begin position="275"/>
        <end position="295"/>
    </location>
</feature>
<feature type="domain" description="ABC transmembrane type-1" evidence="1">
    <location>
        <begin position="28"/>
        <end position="310"/>
    </location>
</feature>
<feature type="domain" description="ABC transporter" evidence="1">
    <location>
        <begin position="342"/>
        <end position="578"/>
    </location>
</feature>
<feature type="binding site" evidence="1">
    <location>
        <begin position="376"/>
        <end position="383"/>
    </location>
    <ligand>
        <name>ATP</name>
        <dbReference type="ChEBI" id="CHEBI:30616"/>
    </ligand>
</feature>
<keyword id="KW-0067">ATP-binding</keyword>
<keyword id="KW-0997">Cell inner membrane</keyword>
<keyword id="KW-1003">Cell membrane</keyword>
<keyword id="KW-0445">Lipid transport</keyword>
<keyword id="KW-0472">Membrane</keyword>
<keyword id="KW-0547">Nucleotide-binding</keyword>
<keyword id="KW-1278">Translocase</keyword>
<keyword id="KW-0812">Transmembrane</keyword>
<keyword id="KW-1133">Transmembrane helix</keyword>
<keyword id="KW-0813">Transport</keyword>
<sequence>MMNDKDLSTWQTFRRLWPTISPYKAGLIVAAIALILNAASDTFMLSLLKPLLDDGFGNSNSSILKWMPLAVIGLMVVRGVTGFVSSYCISWVSGKVVMHIRRRLFSHMMGMPVSFFDQQSTGTLLSRITYDSEQVAASSSSALVTVVREGASIIGLFIMMFYYSWQLSLILIVIAPIVSISIRLVSKRFRNISKNMQNTMGEVTTSAEQMLKGHKEVLIFGGQKVETERFDAVSNRMRQQGMKLVSASSISDPIIQLIASFALALVLYAASFPSVMETLTAGTITVVFSAMIALMRPLKSLTNVNTQFQRGMAACQTLFSILDMEQEKDEGKLEVERAKGDIEFRHVTFYYPGKDTPALNDINIHLEAGKTVALVGRSGSGKSTIANLLTRFYDVSEGSILLDGHDLRDYRLGALRNQVALVSQNVHLFNDTVANNIAYARNEQYSRAEIEEAARMAYAMDFINKMEHGLDTVIGENGIMLSGGQRQRIAIARALLRNCPILILDEATSALDTESERAIQAALDELQKNRTSLVIAHRLSTIEKADEIVVIEDGRIVERGVHAELLVQQGVYAQLNRMQFGQ</sequence>
<evidence type="ECO:0000255" key="1">
    <source>
        <dbReference type="HAMAP-Rule" id="MF_01703"/>
    </source>
</evidence>
<accession>Q1CA68</accession>